<sequence>MQAKAVLRHTPTSPRKMRIVAGLIRGKQVDQAKAILMNSTKAASRNVMQTLKSAVANYSQKNPDTRAGDNDLFIKEIFVDEGPTIKRMLPAPMGRAYRIRKRSNHLTIIVDTVNPVS</sequence>
<protein>
    <recommendedName>
        <fullName evidence="1">Large ribosomal subunit protein uL22</fullName>
    </recommendedName>
    <alternativeName>
        <fullName evidence="2">50S ribosomal protein L22</fullName>
    </alternativeName>
</protein>
<evidence type="ECO:0000255" key="1">
    <source>
        <dbReference type="HAMAP-Rule" id="MF_01331"/>
    </source>
</evidence>
<evidence type="ECO:0000305" key="2"/>
<comment type="function">
    <text evidence="1">This protein binds specifically to 23S rRNA; its binding is stimulated by other ribosomal proteins, e.g. L4, L17, and L20. It is important during the early stages of 50S assembly. It makes multiple contacts with different domains of the 23S rRNA in the assembled 50S subunit and ribosome (By similarity).</text>
</comment>
<comment type="function">
    <text evidence="1">The globular domain of the protein is located near the polypeptide exit tunnel on the outside of the subunit, while an extended beta-hairpin is found that lines the wall of the exit tunnel in the center of the 70S ribosome.</text>
</comment>
<comment type="subunit">
    <text evidence="1">Part of the 50S ribosomal subunit.</text>
</comment>
<comment type="similarity">
    <text evidence="1">Belongs to the universal ribosomal protein uL22 family.</text>
</comment>
<proteinExistence type="inferred from homology"/>
<feature type="chain" id="PRO_1000142244" description="Large ribosomal subunit protein uL22">
    <location>
        <begin position="1"/>
        <end position="117"/>
    </location>
</feature>
<reference key="1">
    <citation type="submission" date="2008-06" db="EMBL/GenBank/DDBJ databases">
        <title>Complete sequence of Chlorobium phaeobacteroides BS1.</title>
        <authorList>
            <consortium name="US DOE Joint Genome Institute"/>
            <person name="Lucas S."/>
            <person name="Copeland A."/>
            <person name="Lapidus A."/>
            <person name="Glavina del Rio T."/>
            <person name="Dalin E."/>
            <person name="Tice H."/>
            <person name="Bruce D."/>
            <person name="Goodwin L."/>
            <person name="Pitluck S."/>
            <person name="Schmutz J."/>
            <person name="Larimer F."/>
            <person name="Land M."/>
            <person name="Hauser L."/>
            <person name="Kyrpides N."/>
            <person name="Ovchinnikova G."/>
            <person name="Li T."/>
            <person name="Liu Z."/>
            <person name="Zhao F."/>
            <person name="Overmann J."/>
            <person name="Bryant D.A."/>
            <person name="Richardson P."/>
        </authorList>
    </citation>
    <scope>NUCLEOTIDE SEQUENCE [LARGE SCALE GENOMIC DNA]</scope>
    <source>
        <strain>BS1</strain>
    </source>
</reference>
<dbReference type="EMBL" id="CP001101">
    <property type="protein sequence ID" value="ACE05195.1"/>
    <property type="molecule type" value="Genomic_DNA"/>
</dbReference>
<dbReference type="SMR" id="B3EP56"/>
<dbReference type="STRING" id="331678.Cphamn1_2291"/>
<dbReference type="KEGG" id="cpb:Cphamn1_2291"/>
<dbReference type="eggNOG" id="COG0091">
    <property type="taxonomic scope" value="Bacteria"/>
</dbReference>
<dbReference type="HOGENOM" id="CLU_083987_3_1_10"/>
<dbReference type="OrthoDB" id="9805969at2"/>
<dbReference type="GO" id="GO:0022625">
    <property type="term" value="C:cytosolic large ribosomal subunit"/>
    <property type="evidence" value="ECO:0007669"/>
    <property type="project" value="TreeGrafter"/>
</dbReference>
<dbReference type="GO" id="GO:0019843">
    <property type="term" value="F:rRNA binding"/>
    <property type="evidence" value="ECO:0007669"/>
    <property type="project" value="UniProtKB-UniRule"/>
</dbReference>
<dbReference type="GO" id="GO:0003735">
    <property type="term" value="F:structural constituent of ribosome"/>
    <property type="evidence" value="ECO:0007669"/>
    <property type="project" value="InterPro"/>
</dbReference>
<dbReference type="GO" id="GO:0006412">
    <property type="term" value="P:translation"/>
    <property type="evidence" value="ECO:0007669"/>
    <property type="project" value="UniProtKB-UniRule"/>
</dbReference>
<dbReference type="CDD" id="cd00336">
    <property type="entry name" value="Ribosomal_L22"/>
    <property type="match status" value="1"/>
</dbReference>
<dbReference type="Gene3D" id="3.90.470.10">
    <property type="entry name" value="Ribosomal protein L22/L17"/>
    <property type="match status" value="1"/>
</dbReference>
<dbReference type="HAMAP" id="MF_01331_B">
    <property type="entry name" value="Ribosomal_uL22_B"/>
    <property type="match status" value="1"/>
</dbReference>
<dbReference type="InterPro" id="IPR001063">
    <property type="entry name" value="Ribosomal_uL22"/>
</dbReference>
<dbReference type="InterPro" id="IPR005727">
    <property type="entry name" value="Ribosomal_uL22_bac/chlpt-type"/>
</dbReference>
<dbReference type="InterPro" id="IPR047867">
    <property type="entry name" value="Ribosomal_uL22_bac/org-type"/>
</dbReference>
<dbReference type="InterPro" id="IPR036394">
    <property type="entry name" value="Ribosomal_uL22_sf"/>
</dbReference>
<dbReference type="NCBIfam" id="TIGR01044">
    <property type="entry name" value="rplV_bact"/>
    <property type="match status" value="1"/>
</dbReference>
<dbReference type="PANTHER" id="PTHR13501">
    <property type="entry name" value="CHLOROPLAST 50S RIBOSOMAL PROTEIN L22-RELATED"/>
    <property type="match status" value="1"/>
</dbReference>
<dbReference type="PANTHER" id="PTHR13501:SF8">
    <property type="entry name" value="LARGE RIBOSOMAL SUBUNIT PROTEIN UL22M"/>
    <property type="match status" value="1"/>
</dbReference>
<dbReference type="Pfam" id="PF00237">
    <property type="entry name" value="Ribosomal_L22"/>
    <property type="match status" value="1"/>
</dbReference>
<dbReference type="SUPFAM" id="SSF54843">
    <property type="entry name" value="Ribosomal protein L22"/>
    <property type="match status" value="1"/>
</dbReference>
<name>RL22_CHLPB</name>
<organism>
    <name type="scientific">Chlorobium phaeobacteroides (strain BS1)</name>
    <dbReference type="NCBI Taxonomy" id="331678"/>
    <lineage>
        <taxon>Bacteria</taxon>
        <taxon>Pseudomonadati</taxon>
        <taxon>Chlorobiota</taxon>
        <taxon>Chlorobiia</taxon>
        <taxon>Chlorobiales</taxon>
        <taxon>Chlorobiaceae</taxon>
        <taxon>Chlorobium/Pelodictyon group</taxon>
        <taxon>Chlorobium</taxon>
    </lineage>
</organism>
<accession>B3EP56</accession>
<keyword id="KW-0687">Ribonucleoprotein</keyword>
<keyword id="KW-0689">Ribosomal protein</keyword>
<keyword id="KW-0694">RNA-binding</keyword>
<keyword id="KW-0699">rRNA-binding</keyword>
<gene>
    <name evidence="1" type="primary">rplV</name>
    <name type="ordered locus">Cphamn1_2291</name>
</gene>